<keyword id="KW-0002">3D-structure</keyword>
<keyword id="KW-1185">Reference proteome</keyword>
<keyword id="KW-0677">Repeat</keyword>
<keyword id="KW-0687">Ribonucleoprotein</keyword>
<keyword id="KW-0689">Ribosomal protein</keyword>
<keyword id="KW-0853">WD repeat</keyword>
<name>GBLP_DROME</name>
<accession>O18640</accession>
<accession>Q9VLW5</accession>
<dbReference type="EMBL" id="U96491">
    <property type="protein sequence ID" value="AAB72148.1"/>
    <property type="molecule type" value="mRNA"/>
</dbReference>
<dbReference type="EMBL" id="AE014134">
    <property type="protein sequence ID" value="AAF52566.1"/>
    <property type="molecule type" value="Genomic_DNA"/>
</dbReference>
<dbReference type="EMBL" id="AY071661">
    <property type="protein sequence ID" value="AAL49283.1"/>
    <property type="molecule type" value="mRNA"/>
</dbReference>
<dbReference type="RefSeq" id="NP_001260218.1">
    <property type="nucleotide sequence ID" value="NM_001273289.1"/>
</dbReference>
<dbReference type="RefSeq" id="NP_001285723.1">
    <property type="nucleotide sequence ID" value="NM_001298794.1"/>
</dbReference>
<dbReference type="RefSeq" id="NP_477269.1">
    <property type="nucleotide sequence ID" value="NM_057921.4"/>
</dbReference>
<dbReference type="PDB" id="4V6W">
    <property type="method" value="EM"/>
    <property type="resolution" value="6.00 A"/>
    <property type="chains" value="Ag=1-318"/>
</dbReference>
<dbReference type="PDB" id="6XU6">
    <property type="method" value="EM"/>
    <property type="resolution" value="3.50 A"/>
    <property type="chains" value="Ag=1-318"/>
</dbReference>
<dbReference type="PDB" id="6XU7">
    <property type="method" value="EM"/>
    <property type="resolution" value="4.90 A"/>
    <property type="chains" value="Ag=1-318"/>
</dbReference>
<dbReference type="PDB" id="6XU8">
    <property type="method" value="EM"/>
    <property type="resolution" value="3.00 A"/>
    <property type="chains" value="Ag=1-318"/>
</dbReference>
<dbReference type="PDBsum" id="4V6W"/>
<dbReference type="PDBsum" id="6XU6"/>
<dbReference type="PDBsum" id="6XU7"/>
<dbReference type="PDBsum" id="6XU8"/>
<dbReference type="EMDB" id="EMD-10622"/>
<dbReference type="EMDB" id="EMD-10623"/>
<dbReference type="EMDB" id="EMD-10624"/>
<dbReference type="SMR" id="O18640"/>
<dbReference type="BioGRID" id="60209">
    <property type="interactions" value="139"/>
</dbReference>
<dbReference type="DIP" id="DIP-17169N"/>
<dbReference type="FunCoup" id="O18640">
    <property type="interactions" value="1887"/>
</dbReference>
<dbReference type="IntAct" id="O18640">
    <property type="interactions" value="29"/>
</dbReference>
<dbReference type="STRING" id="7227.FBpp0303680"/>
<dbReference type="PaxDb" id="7227-FBpp0303680"/>
<dbReference type="EnsemblMetazoa" id="FBtr0079565">
    <property type="protein sequence ID" value="FBpp0079187"/>
    <property type="gene ID" value="FBgn0020618"/>
</dbReference>
<dbReference type="EnsemblMetazoa" id="FBtr0331238">
    <property type="protein sequence ID" value="FBpp0303680"/>
    <property type="gene ID" value="FBgn0020618"/>
</dbReference>
<dbReference type="EnsemblMetazoa" id="FBtr0345448">
    <property type="protein sequence ID" value="FBpp0311572"/>
    <property type="gene ID" value="FBgn0020618"/>
</dbReference>
<dbReference type="GeneID" id="34070"/>
<dbReference type="KEGG" id="dme:Dmel_CG7111"/>
<dbReference type="AGR" id="FB:FBgn0020618"/>
<dbReference type="CTD" id="10399"/>
<dbReference type="FlyBase" id="FBgn0020618">
    <property type="gene designation" value="Rack1"/>
</dbReference>
<dbReference type="VEuPathDB" id="VectorBase:FBgn0020618"/>
<dbReference type="eggNOG" id="KOG0279">
    <property type="taxonomic scope" value="Eukaryota"/>
</dbReference>
<dbReference type="GeneTree" id="ENSGT00940000154461"/>
<dbReference type="HOGENOM" id="CLU_000288_57_7_1"/>
<dbReference type="InParanoid" id="O18640"/>
<dbReference type="OMA" id="NCKLKIN"/>
<dbReference type="OrthoDB" id="7875889at2759"/>
<dbReference type="PhylomeDB" id="O18640"/>
<dbReference type="Reactome" id="R-DME-5357905">
    <property type="pathway name" value="Regulation of TNFR1 signaling"/>
</dbReference>
<dbReference type="SignaLink" id="O18640"/>
<dbReference type="BioGRID-ORCS" id="34070">
    <property type="hits" value="0 hits in 1 CRISPR screen"/>
</dbReference>
<dbReference type="ChiTaRS" id="Rack1">
    <property type="organism name" value="fly"/>
</dbReference>
<dbReference type="GenomeRNAi" id="34070"/>
<dbReference type="PRO" id="PR:O18640"/>
<dbReference type="Proteomes" id="UP000000803">
    <property type="component" value="Chromosome 2L"/>
</dbReference>
<dbReference type="Bgee" id="FBgn0020618">
    <property type="expression patterns" value="Expressed in wing disc and 293 other cell types or tissues"/>
</dbReference>
<dbReference type="ExpressionAtlas" id="O18640">
    <property type="expression patterns" value="baseline and differential"/>
</dbReference>
<dbReference type="GO" id="GO:0005776">
    <property type="term" value="C:autophagosome"/>
    <property type="evidence" value="ECO:0000314"/>
    <property type="project" value="FlyBase"/>
</dbReference>
<dbReference type="GO" id="GO:0005737">
    <property type="term" value="C:cytoplasm"/>
    <property type="evidence" value="ECO:0000314"/>
    <property type="project" value="FlyBase"/>
</dbReference>
<dbReference type="GO" id="GO:0005829">
    <property type="term" value="C:cytosol"/>
    <property type="evidence" value="ECO:0000314"/>
    <property type="project" value="FlyBase"/>
</dbReference>
<dbReference type="GO" id="GO:0022626">
    <property type="term" value="C:cytosolic ribosome"/>
    <property type="evidence" value="ECO:0000314"/>
    <property type="project" value="FlyBase"/>
</dbReference>
<dbReference type="GO" id="GO:0005634">
    <property type="term" value="C:nucleus"/>
    <property type="evidence" value="ECO:0000318"/>
    <property type="project" value="GO_Central"/>
</dbReference>
<dbReference type="GO" id="GO:1990904">
    <property type="term" value="C:ribonucleoprotein complex"/>
    <property type="evidence" value="ECO:0007669"/>
    <property type="project" value="UniProtKB-KW"/>
</dbReference>
<dbReference type="GO" id="GO:0005080">
    <property type="term" value="F:protein kinase C binding"/>
    <property type="evidence" value="ECO:0000318"/>
    <property type="project" value="GO_Central"/>
</dbReference>
<dbReference type="GO" id="GO:0030674">
    <property type="term" value="F:protein-macromolecule adaptor activity"/>
    <property type="evidence" value="ECO:0000353"/>
    <property type="project" value="FlyBase"/>
</dbReference>
<dbReference type="GO" id="GO:0043022">
    <property type="term" value="F:ribosome binding"/>
    <property type="evidence" value="ECO:0000318"/>
    <property type="project" value="GO_Central"/>
</dbReference>
<dbReference type="GO" id="GO:0003735">
    <property type="term" value="F:structural constituent of ribosome"/>
    <property type="evidence" value="ECO:0000314"/>
    <property type="project" value="FlyBase"/>
</dbReference>
<dbReference type="GO" id="GO:0045182">
    <property type="term" value="F:translation regulator activity"/>
    <property type="evidence" value="ECO:0007669"/>
    <property type="project" value="InterPro"/>
</dbReference>
<dbReference type="GO" id="GO:0009267">
    <property type="term" value="P:cellular response to starvation"/>
    <property type="evidence" value="ECO:0000315"/>
    <property type="project" value="FlyBase"/>
</dbReference>
<dbReference type="GO" id="GO:0042335">
    <property type="term" value="P:cuticle development"/>
    <property type="evidence" value="ECO:0000315"/>
    <property type="project" value="FlyBase"/>
</dbReference>
<dbReference type="GO" id="GO:0002181">
    <property type="term" value="P:cytoplasmic translation"/>
    <property type="evidence" value="ECO:0000305"/>
    <property type="project" value="FlyBase"/>
</dbReference>
<dbReference type="GO" id="GO:0018991">
    <property type="term" value="P:egg-laying behavior"/>
    <property type="evidence" value="ECO:0000315"/>
    <property type="project" value="FlyBase"/>
</dbReference>
<dbReference type="GO" id="GO:0075522">
    <property type="term" value="P:IRES-dependent viral translational initiation"/>
    <property type="evidence" value="ECO:0000315"/>
    <property type="project" value="FlyBase"/>
</dbReference>
<dbReference type="GO" id="GO:0007626">
    <property type="term" value="P:locomotory behavior"/>
    <property type="evidence" value="ECO:0000315"/>
    <property type="project" value="FlyBase"/>
</dbReference>
<dbReference type="GO" id="GO:0000423">
    <property type="term" value="P:mitophagy"/>
    <property type="evidence" value="ECO:0000315"/>
    <property type="project" value="FlyBase"/>
</dbReference>
<dbReference type="GO" id="GO:0046716">
    <property type="term" value="P:muscle cell cellular homeostasis"/>
    <property type="evidence" value="ECO:0000316"/>
    <property type="project" value="FlyBase"/>
</dbReference>
<dbReference type="GO" id="GO:0001933">
    <property type="term" value="P:negative regulation of protein phosphorylation"/>
    <property type="evidence" value="ECO:0000315"/>
    <property type="project" value="UniProtKB"/>
</dbReference>
<dbReference type="GO" id="GO:0045879">
    <property type="term" value="P:negative regulation of smoothened signaling pathway"/>
    <property type="evidence" value="ECO:0000315"/>
    <property type="project" value="FlyBase"/>
</dbReference>
<dbReference type="GO" id="GO:2001125">
    <property type="term" value="P:negative regulation of translational frameshifting"/>
    <property type="evidence" value="ECO:0000318"/>
    <property type="project" value="GO_Central"/>
</dbReference>
<dbReference type="GO" id="GO:0048477">
    <property type="term" value="P:oogenesis"/>
    <property type="evidence" value="ECO:0000315"/>
    <property type="project" value="FlyBase"/>
</dbReference>
<dbReference type="GO" id="GO:0044829">
    <property type="term" value="P:positive regulation by host of viral genome replication"/>
    <property type="evidence" value="ECO:0000315"/>
    <property type="project" value="FlyBase"/>
</dbReference>
<dbReference type="GO" id="GO:0030838">
    <property type="term" value="P:positive regulation of actin filament polymerization"/>
    <property type="evidence" value="ECO:0000315"/>
    <property type="project" value="UniProtKB"/>
</dbReference>
<dbReference type="GO" id="GO:0045725">
    <property type="term" value="P:positive regulation of glycogen biosynthetic process"/>
    <property type="evidence" value="ECO:0000315"/>
    <property type="project" value="FlyBase"/>
</dbReference>
<dbReference type="GO" id="GO:1903003">
    <property type="term" value="P:positive regulation of protein deubiquitination"/>
    <property type="evidence" value="ECO:0000314"/>
    <property type="project" value="FlyBase"/>
</dbReference>
<dbReference type="GO" id="GO:0031398">
    <property type="term" value="P:positive regulation of protein ubiquitination"/>
    <property type="evidence" value="ECO:0000316"/>
    <property type="project" value="FlyBase"/>
</dbReference>
<dbReference type="GO" id="GO:0016243">
    <property type="term" value="P:regulation of autophagosome size"/>
    <property type="evidence" value="ECO:0000315"/>
    <property type="project" value="FlyBase"/>
</dbReference>
<dbReference type="GO" id="GO:0072344">
    <property type="term" value="P:rescue of stalled ribosome"/>
    <property type="evidence" value="ECO:0000318"/>
    <property type="project" value="GO_Central"/>
</dbReference>
<dbReference type="GO" id="GO:0002188">
    <property type="term" value="P:translation reinitiation"/>
    <property type="evidence" value="ECO:0000316"/>
    <property type="project" value="FlyBase"/>
</dbReference>
<dbReference type="GO" id="GO:0035220">
    <property type="term" value="P:wing disc development"/>
    <property type="evidence" value="ECO:0000315"/>
    <property type="project" value="FlyBase"/>
</dbReference>
<dbReference type="CDD" id="cd00200">
    <property type="entry name" value="WD40"/>
    <property type="match status" value="1"/>
</dbReference>
<dbReference type="FunFam" id="2.130.10.10:FF:000018">
    <property type="entry name" value="Receptor for activated C kinase 1"/>
    <property type="match status" value="1"/>
</dbReference>
<dbReference type="Gene3D" id="2.130.10.10">
    <property type="entry name" value="YVTN repeat-like/Quinoprotein amine dehydrogenase"/>
    <property type="match status" value="1"/>
</dbReference>
<dbReference type="InterPro" id="IPR020472">
    <property type="entry name" value="G-protein_beta_WD-40_rep"/>
</dbReference>
<dbReference type="InterPro" id="IPR045223">
    <property type="entry name" value="RACK1-like"/>
</dbReference>
<dbReference type="InterPro" id="IPR015943">
    <property type="entry name" value="WD40/YVTN_repeat-like_dom_sf"/>
</dbReference>
<dbReference type="InterPro" id="IPR019775">
    <property type="entry name" value="WD40_repeat_CS"/>
</dbReference>
<dbReference type="InterPro" id="IPR036322">
    <property type="entry name" value="WD40_repeat_dom_sf"/>
</dbReference>
<dbReference type="InterPro" id="IPR001680">
    <property type="entry name" value="WD40_rpt"/>
</dbReference>
<dbReference type="PANTHER" id="PTHR19868">
    <property type="entry name" value="RECEPTOR FOR ACTIVATED PROTEIN KINASE C RACK1"/>
    <property type="match status" value="1"/>
</dbReference>
<dbReference type="Pfam" id="PF00400">
    <property type="entry name" value="WD40"/>
    <property type="match status" value="7"/>
</dbReference>
<dbReference type="PRINTS" id="PR00320">
    <property type="entry name" value="GPROTEINBRPT"/>
</dbReference>
<dbReference type="SMART" id="SM00320">
    <property type="entry name" value="WD40"/>
    <property type="match status" value="7"/>
</dbReference>
<dbReference type="SUPFAM" id="SSF50978">
    <property type="entry name" value="WD40 repeat-like"/>
    <property type="match status" value="1"/>
</dbReference>
<dbReference type="PROSITE" id="PS00678">
    <property type="entry name" value="WD_REPEATS_1"/>
    <property type="match status" value="4"/>
</dbReference>
<dbReference type="PROSITE" id="PS50082">
    <property type="entry name" value="WD_REPEATS_2"/>
    <property type="match status" value="6"/>
</dbReference>
<dbReference type="PROSITE" id="PS50294">
    <property type="entry name" value="WD_REPEATS_REGION"/>
    <property type="match status" value="1"/>
</dbReference>
<comment type="function">
    <text evidence="1">Involved in the recruitment, assembly and/or regulation of a variety of signaling molecules. Interacts with a wide variety of proteins and plays a role in many cellular processes (By similarity).</text>
</comment>
<comment type="subunit">
    <text evidence="2">Interacts with the 80S ribosome.</text>
</comment>
<comment type="tissue specificity">
    <text evidence="3">Highest expression in the mesodermal and endodermal lineages.</text>
</comment>
<comment type="similarity">
    <text evidence="4">Belongs to the WD repeat G protein beta family. Ribosomal protein RACK1 subfamily.</text>
</comment>
<reference key="1">
    <citation type="journal article" date="1997" name="Biochim. Biophys. Acta">
        <title>Isolation and cloning of a Drosophila homolog to the mammalian RACK1 gene, implicated in PKC-mediated signalling.</title>
        <authorList>
            <person name="Vani K."/>
            <person name="Yang G."/>
            <person name="Mohler J."/>
        </authorList>
    </citation>
    <scope>NUCLEOTIDE SEQUENCE [MRNA]</scope>
    <scope>TISSUE SPECIFICITY</scope>
    <source>
        <strain>Oregon-R</strain>
    </source>
</reference>
<reference key="2">
    <citation type="journal article" date="2000" name="Science">
        <title>The genome sequence of Drosophila melanogaster.</title>
        <authorList>
            <person name="Adams M.D."/>
            <person name="Celniker S.E."/>
            <person name="Holt R.A."/>
            <person name="Evans C.A."/>
            <person name="Gocayne J.D."/>
            <person name="Amanatides P.G."/>
            <person name="Scherer S.E."/>
            <person name="Li P.W."/>
            <person name="Hoskins R.A."/>
            <person name="Galle R.F."/>
            <person name="George R.A."/>
            <person name="Lewis S.E."/>
            <person name="Richards S."/>
            <person name="Ashburner M."/>
            <person name="Henderson S.N."/>
            <person name="Sutton G.G."/>
            <person name="Wortman J.R."/>
            <person name="Yandell M.D."/>
            <person name="Zhang Q."/>
            <person name="Chen L.X."/>
            <person name="Brandon R.C."/>
            <person name="Rogers Y.-H.C."/>
            <person name="Blazej R.G."/>
            <person name="Champe M."/>
            <person name="Pfeiffer B.D."/>
            <person name="Wan K.H."/>
            <person name="Doyle C."/>
            <person name="Baxter E.G."/>
            <person name="Helt G."/>
            <person name="Nelson C.R."/>
            <person name="Miklos G.L.G."/>
            <person name="Abril J.F."/>
            <person name="Agbayani A."/>
            <person name="An H.-J."/>
            <person name="Andrews-Pfannkoch C."/>
            <person name="Baldwin D."/>
            <person name="Ballew R.M."/>
            <person name="Basu A."/>
            <person name="Baxendale J."/>
            <person name="Bayraktaroglu L."/>
            <person name="Beasley E.M."/>
            <person name="Beeson K.Y."/>
            <person name="Benos P.V."/>
            <person name="Berman B.P."/>
            <person name="Bhandari D."/>
            <person name="Bolshakov S."/>
            <person name="Borkova D."/>
            <person name="Botchan M.R."/>
            <person name="Bouck J."/>
            <person name="Brokstein P."/>
            <person name="Brottier P."/>
            <person name="Burtis K.C."/>
            <person name="Busam D.A."/>
            <person name="Butler H."/>
            <person name="Cadieu E."/>
            <person name="Center A."/>
            <person name="Chandra I."/>
            <person name="Cherry J.M."/>
            <person name="Cawley S."/>
            <person name="Dahlke C."/>
            <person name="Davenport L.B."/>
            <person name="Davies P."/>
            <person name="de Pablos B."/>
            <person name="Delcher A."/>
            <person name="Deng Z."/>
            <person name="Mays A.D."/>
            <person name="Dew I."/>
            <person name="Dietz S.M."/>
            <person name="Dodson K."/>
            <person name="Doup L.E."/>
            <person name="Downes M."/>
            <person name="Dugan-Rocha S."/>
            <person name="Dunkov B.C."/>
            <person name="Dunn P."/>
            <person name="Durbin K.J."/>
            <person name="Evangelista C.C."/>
            <person name="Ferraz C."/>
            <person name="Ferriera S."/>
            <person name="Fleischmann W."/>
            <person name="Fosler C."/>
            <person name="Gabrielian A.E."/>
            <person name="Garg N.S."/>
            <person name="Gelbart W.M."/>
            <person name="Glasser K."/>
            <person name="Glodek A."/>
            <person name="Gong F."/>
            <person name="Gorrell J.H."/>
            <person name="Gu Z."/>
            <person name="Guan P."/>
            <person name="Harris M."/>
            <person name="Harris N.L."/>
            <person name="Harvey D.A."/>
            <person name="Heiman T.J."/>
            <person name="Hernandez J.R."/>
            <person name="Houck J."/>
            <person name="Hostin D."/>
            <person name="Houston K.A."/>
            <person name="Howland T.J."/>
            <person name="Wei M.-H."/>
            <person name="Ibegwam C."/>
            <person name="Jalali M."/>
            <person name="Kalush F."/>
            <person name="Karpen G.H."/>
            <person name="Ke Z."/>
            <person name="Kennison J.A."/>
            <person name="Ketchum K.A."/>
            <person name="Kimmel B.E."/>
            <person name="Kodira C.D."/>
            <person name="Kraft C.L."/>
            <person name="Kravitz S."/>
            <person name="Kulp D."/>
            <person name="Lai Z."/>
            <person name="Lasko P."/>
            <person name="Lei Y."/>
            <person name="Levitsky A.A."/>
            <person name="Li J.H."/>
            <person name="Li Z."/>
            <person name="Liang Y."/>
            <person name="Lin X."/>
            <person name="Liu X."/>
            <person name="Mattei B."/>
            <person name="McIntosh T.C."/>
            <person name="McLeod M.P."/>
            <person name="McPherson D."/>
            <person name="Merkulov G."/>
            <person name="Milshina N.V."/>
            <person name="Mobarry C."/>
            <person name="Morris J."/>
            <person name="Moshrefi A."/>
            <person name="Mount S.M."/>
            <person name="Moy M."/>
            <person name="Murphy B."/>
            <person name="Murphy L."/>
            <person name="Muzny D.M."/>
            <person name="Nelson D.L."/>
            <person name="Nelson D.R."/>
            <person name="Nelson K.A."/>
            <person name="Nixon K."/>
            <person name="Nusskern D.R."/>
            <person name="Pacleb J.M."/>
            <person name="Palazzolo M."/>
            <person name="Pittman G.S."/>
            <person name="Pan S."/>
            <person name="Pollard J."/>
            <person name="Puri V."/>
            <person name="Reese M.G."/>
            <person name="Reinert K."/>
            <person name="Remington K."/>
            <person name="Saunders R.D.C."/>
            <person name="Scheeler F."/>
            <person name="Shen H."/>
            <person name="Shue B.C."/>
            <person name="Siden-Kiamos I."/>
            <person name="Simpson M."/>
            <person name="Skupski M.P."/>
            <person name="Smith T.J."/>
            <person name="Spier E."/>
            <person name="Spradling A.C."/>
            <person name="Stapleton M."/>
            <person name="Strong R."/>
            <person name="Sun E."/>
            <person name="Svirskas R."/>
            <person name="Tector C."/>
            <person name="Turner R."/>
            <person name="Venter E."/>
            <person name="Wang A.H."/>
            <person name="Wang X."/>
            <person name="Wang Z.-Y."/>
            <person name="Wassarman D.A."/>
            <person name="Weinstock G.M."/>
            <person name="Weissenbach J."/>
            <person name="Williams S.M."/>
            <person name="Woodage T."/>
            <person name="Worley K.C."/>
            <person name="Wu D."/>
            <person name="Yang S."/>
            <person name="Yao Q.A."/>
            <person name="Ye J."/>
            <person name="Yeh R.-F."/>
            <person name="Zaveri J.S."/>
            <person name="Zhan M."/>
            <person name="Zhang G."/>
            <person name="Zhao Q."/>
            <person name="Zheng L."/>
            <person name="Zheng X.H."/>
            <person name="Zhong F.N."/>
            <person name="Zhong W."/>
            <person name="Zhou X."/>
            <person name="Zhu S.C."/>
            <person name="Zhu X."/>
            <person name="Smith H.O."/>
            <person name="Gibbs R.A."/>
            <person name="Myers E.W."/>
            <person name="Rubin G.M."/>
            <person name="Venter J.C."/>
        </authorList>
    </citation>
    <scope>NUCLEOTIDE SEQUENCE [LARGE SCALE GENOMIC DNA]</scope>
    <source>
        <strain>Berkeley</strain>
    </source>
</reference>
<reference key="3">
    <citation type="journal article" date="2002" name="Genome Biol.">
        <title>Annotation of the Drosophila melanogaster euchromatic genome: a systematic review.</title>
        <authorList>
            <person name="Misra S."/>
            <person name="Crosby M.A."/>
            <person name="Mungall C.J."/>
            <person name="Matthews B.B."/>
            <person name="Campbell K.S."/>
            <person name="Hradecky P."/>
            <person name="Huang Y."/>
            <person name="Kaminker J.S."/>
            <person name="Millburn G.H."/>
            <person name="Prochnik S.E."/>
            <person name="Smith C.D."/>
            <person name="Tupy J.L."/>
            <person name="Whitfield E.J."/>
            <person name="Bayraktaroglu L."/>
            <person name="Berman B.P."/>
            <person name="Bettencourt B.R."/>
            <person name="Celniker S.E."/>
            <person name="de Grey A.D.N.J."/>
            <person name="Drysdale R.A."/>
            <person name="Harris N.L."/>
            <person name="Richter J."/>
            <person name="Russo S."/>
            <person name="Schroeder A.J."/>
            <person name="Shu S.Q."/>
            <person name="Stapleton M."/>
            <person name="Yamada C."/>
            <person name="Ashburner M."/>
            <person name="Gelbart W.M."/>
            <person name="Rubin G.M."/>
            <person name="Lewis S.E."/>
        </authorList>
    </citation>
    <scope>GENOME REANNOTATION</scope>
    <source>
        <strain>Berkeley</strain>
    </source>
</reference>
<reference key="4">
    <citation type="journal article" date="2002" name="Genome Biol.">
        <title>A Drosophila full-length cDNA resource.</title>
        <authorList>
            <person name="Stapleton M."/>
            <person name="Carlson J.W."/>
            <person name="Brokstein P."/>
            <person name="Yu C."/>
            <person name="Champe M."/>
            <person name="George R.A."/>
            <person name="Guarin H."/>
            <person name="Kronmiller B."/>
            <person name="Pacleb J.M."/>
            <person name="Park S."/>
            <person name="Wan K.H."/>
            <person name="Rubin G.M."/>
            <person name="Celniker S.E."/>
        </authorList>
    </citation>
    <scope>NUCLEOTIDE SEQUENCE [LARGE SCALE MRNA]</scope>
    <source>
        <strain>Berkeley</strain>
        <tissue>Embryo</tissue>
    </source>
</reference>
<reference key="5">
    <citation type="journal article" date="2013" name="Nature">
        <title>Structures of the human and Drosophila 80S ribosome.</title>
        <authorList>
            <person name="Anger A.M."/>
            <person name="Armache J.P."/>
            <person name="Berninghausen O."/>
            <person name="Habeck M."/>
            <person name="Subklewe M."/>
            <person name="Wilson D.N."/>
            <person name="Beckmann R."/>
        </authorList>
    </citation>
    <scope>STRUCTURE BY ELECTRON MICROSCOPY (6.0 ANGSTROMS) IN COMPLEX WITH THE 80S RIBOSOME</scope>
    <scope>SUBUNIT</scope>
</reference>
<feature type="chain" id="PRO_0000127740" description="Small ribosomal subunit protein RACK1">
    <location>
        <begin position="1"/>
        <end position="318"/>
    </location>
</feature>
<feature type="repeat" description="WD 1">
    <location>
        <begin position="13"/>
        <end position="44"/>
    </location>
</feature>
<feature type="repeat" description="WD 2">
    <location>
        <begin position="62"/>
        <end position="92"/>
    </location>
</feature>
<feature type="repeat" description="WD 3">
    <location>
        <begin position="104"/>
        <end position="134"/>
    </location>
</feature>
<feature type="repeat" description="WD 4">
    <location>
        <begin position="147"/>
        <end position="179"/>
    </location>
</feature>
<feature type="repeat" description="WD 5">
    <location>
        <begin position="191"/>
        <end position="221"/>
    </location>
</feature>
<feature type="repeat" description="WD 6">
    <location>
        <begin position="232"/>
        <end position="261"/>
    </location>
</feature>
<feature type="repeat" description="WD 7">
    <location>
        <begin position="282"/>
        <end position="312"/>
    </location>
</feature>
<feature type="sequence conflict" description="In Ref. 1; AAB72148." evidence="4" ref="1">
    <original>G</original>
    <variation>R</variation>
    <location>
        <position position="104"/>
    </location>
</feature>
<proteinExistence type="evidence at protein level"/>
<organism>
    <name type="scientific">Drosophila melanogaster</name>
    <name type="common">Fruit fly</name>
    <dbReference type="NCBI Taxonomy" id="7227"/>
    <lineage>
        <taxon>Eukaryota</taxon>
        <taxon>Metazoa</taxon>
        <taxon>Ecdysozoa</taxon>
        <taxon>Arthropoda</taxon>
        <taxon>Hexapoda</taxon>
        <taxon>Insecta</taxon>
        <taxon>Pterygota</taxon>
        <taxon>Neoptera</taxon>
        <taxon>Endopterygota</taxon>
        <taxon>Diptera</taxon>
        <taxon>Brachycera</taxon>
        <taxon>Muscomorpha</taxon>
        <taxon>Ephydroidea</taxon>
        <taxon>Drosophilidae</taxon>
        <taxon>Drosophila</taxon>
        <taxon>Sophophora</taxon>
    </lineage>
</organism>
<gene>
    <name type="primary">Rack1</name>
    <name type="ORF">CG7111</name>
</gene>
<sequence length="318" mass="35618">MSETLQLRGTLIGHNGWVTQIATNPKDPDTIISASRDKTLIVWKLTRDEDTNYGYPQKRLYGHSHFISDVVLSSDGNYALSGSWDQTLRLWDLAAGKTTRRFEGHTKDVLSVAFSADNRQIVSGSRDKTIKLWNTLAECKFTIQEDGHTDWVSCVRFSPNHSNPIIVSCGWDRTVKVWNLANCKLKNNHHGHNGYLNTVTVSPDGSLCTSGGKDSKALLWDLNDGKNLYTLEHNDIINALCFSPNRYWLCVAYGPSIKIWDLACKKTVEELRPEVVSPTSKADQPQCLSLAWSTDGQTLFAGYSDNTIRVWQVSVSAH</sequence>
<protein>
    <recommendedName>
        <fullName evidence="4">Small ribosomal subunit protein RACK1</fullName>
    </recommendedName>
    <alternativeName>
        <fullName>Guanine nucleotide-binding protein subunit beta-like protein</fullName>
    </alternativeName>
    <alternativeName>
        <fullName>Receptor of activated protein kinase C homolog</fullName>
    </alternativeName>
</protein>
<evidence type="ECO:0000250" key="1"/>
<evidence type="ECO:0000269" key="2">
    <source>
    </source>
</evidence>
<evidence type="ECO:0000269" key="3">
    <source>
    </source>
</evidence>
<evidence type="ECO:0000305" key="4"/>